<accession>Q5UQL2</accession>
<keyword id="KW-1185">Reference proteome</keyword>
<keyword id="KW-0677">Repeat</keyword>
<feature type="chain" id="PRO_0000119989" description="Putative F-box and FNIP repeat-containing protein L414">
    <location>
        <begin position="1"/>
        <end position="516"/>
    </location>
</feature>
<feature type="domain" description="F-box">
    <location>
        <begin position="4"/>
        <end position="49"/>
    </location>
</feature>
<feature type="repeat" description="FNIP 1">
    <location>
        <begin position="123"/>
        <end position="165"/>
    </location>
</feature>
<feature type="repeat" description="FNIP 2">
    <location>
        <begin position="166"/>
        <end position="208"/>
    </location>
</feature>
<feature type="repeat" description="FNIP 3">
    <location>
        <begin position="341"/>
        <end position="383"/>
    </location>
</feature>
<feature type="repeat" description="FNIP 4">
    <location>
        <begin position="385"/>
        <end position="428"/>
    </location>
</feature>
<feature type="repeat" description="FNIP 5">
    <location>
        <begin position="429"/>
        <end position="470"/>
    </location>
</feature>
<reference key="1">
    <citation type="journal article" date="2004" name="Science">
        <title>The 1.2-megabase genome sequence of Mimivirus.</title>
        <authorList>
            <person name="Raoult D."/>
            <person name="Audic S."/>
            <person name="Robert C."/>
            <person name="Abergel C."/>
            <person name="Renesto P."/>
            <person name="Ogata H."/>
            <person name="La Scola B."/>
            <person name="Susan M."/>
            <person name="Claverie J.-M."/>
        </authorList>
    </citation>
    <scope>NUCLEOTIDE SEQUENCE [LARGE SCALE GENOMIC DNA]</scope>
    <source>
        <strain>Rowbotham-Bradford</strain>
    </source>
</reference>
<gene>
    <name type="ordered locus">MIMI_L414</name>
</gene>
<organismHost>
    <name type="scientific">Acanthamoeba polyphaga</name>
    <name type="common">Amoeba</name>
    <dbReference type="NCBI Taxonomy" id="5757"/>
</organismHost>
<protein>
    <recommendedName>
        <fullName>Putative F-box and FNIP repeat-containing protein L414</fullName>
    </recommendedName>
</protein>
<name>YL414_MIMIV</name>
<sequence>MLSINDLNMDVILHLLTFLTDKNKLNFMMTCTHLYQFISCVKYNNFQLFDKIRGLSFRNNFKKIIYFKEIKERENKNTVFVLKSNRDKIPLGTTCIKTGRYFNFLEMGVIPEGIISLEFCEYFNHTLKKGHIPETVTHLTINNGFRHMEKGSIPNSVTHLIFGENFNKMIDVGVIPNSVVYLKFGRVFNQSIKNVIPHNVKYLSLMYSFNQPISEEIYIDDTLKTISYIPKSVKYFDYETSNDEFDFKILSENITYLNIIINKHIYPGDIPSSVTRLGLLSNEDVRPEAIPDNVTHLSFDLYYFGNYSLNQLIHKNITHLNLGDLSVSCDRIPNGVTHLTYNPKYLTKNSIPNSVTHLTINNKIKGSIDRCIPNSVVYLNFNGTYDNIIYKGDIPDNVRCLIFGNNFDQYIEEGAIPNSVVCLNFGKLYNKPVNNVIPNNVKNLTFGYEFNKPIENAIPNNTNHIEFGYMFNQSLKNSIPDSVTRLVFNYGLKSIYKINKKFMNNIPKTVSVILFR</sequence>
<proteinExistence type="predicted"/>
<organism>
    <name type="scientific">Acanthamoeba polyphaga mimivirus</name>
    <name type="common">APMV</name>
    <dbReference type="NCBI Taxonomy" id="212035"/>
    <lineage>
        <taxon>Viruses</taxon>
        <taxon>Varidnaviria</taxon>
        <taxon>Bamfordvirae</taxon>
        <taxon>Nucleocytoviricota</taxon>
        <taxon>Megaviricetes</taxon>
        <taxon>Imitervirales</taxon>
        <taxon>Mimiviridae</taxon>
        <taxon>Megamimivirinae</taxon>
        <taxon>Mimivirus</taxon>
        <taxon>Mimivirus bradfordmassiliense</taxon>
    </lineage>
</organism>
<dbReference type="EMBL" id="AY653733">
    <property type="protein sequence ID" value="AAV50683.1"/>
    <property type="molecule type" value="Genomic_DNA"/>
</dbReference>
<dbReference type="SMR" id="Q5UQL2"/>
<dbReference type="KEGG" id="vg:9925035"/>
<dbReference type="OrthoDB" id="31047at10239"/>
<dbReference type="Proteomes" id="UP000001134">
    <property type="component" value="Genome"/>
</dbReference>
<dbReference type="InterPro" id="IPR008615">
    <property type="entry name" value="FNIP"/>
</dbReference>
<dbReference type="InterPro" id="IPR051251">
    <property type="entry name" value="STK_FNIP-Repeat"/>
</dbReference>
<dbReference type="PANTHER" id="PTHR32134">
    <property type="entry name" value="FNIP REPEAT-CONTAINING PROTEIN"/>
    <property type="match status" value="1"/>
</dbReference>
<dbReference type="PANTHER" id="PTHR32134:SF169">
    <property type="entry name" value="FNIP REPEAT-CONTAINING PROTEIN-RELATED"/>
    <property type="match status" value="1"/>
</dbReference>
<dbReference type="Pfam" id="PF05725">
    <property type="entry name" value="FNIP"/>
    <property type="match status" value="6"/>
</dbReference>
<dbReference type="SUPFAM" id="SSF52058">
    <property type="entry name" value="L domain-like"/>
    <property type="match status" value="1"/>
</dbReference>